<accession>Q7TWL7</accession>
<accession>A0A1R3Y4Q0</accession>
<accession>X2BNA0</accession>
<reference key="1">
    <citation type="journal article" date="2003" name="Proc. Natl. Acad. Sci. U.S.A.">
        <title>The complete genome sequence of Mycobacterium bovis.</title>
        <authorList>
            <person name="Garnier T."/>
            <person name="Eiglmeier K."/>
            <person name="Camus J.-C."/>
            <person name="Medina N."/>
            <person name="Mansoor H."/>
            <person name="Pryor M."/>
            <person name="Duthoy S."/>
            <person name="Grondin S."/>
            <person name="Lacroix C."/>
            <person name="Monsempe C."/>
            <person name="Simon S."/>
            <person name="Harris B."/>
            <person name="Atkin R."/>
            <person name="Doggett J."/>
            <person name="Mayes R."/>
            <person name="Keating L."/>
            <person name="Wheeler P.R."/>
            <person name="Parkhill J."/>
            <person name="Barrell B.G."/>
            <person name="Cole S.T."/>
            <person name="Gordon S.V."/>
            <person name="Hewinson R.G."/>
        </authorList>
    </citation>
    <scope>NUCLEOTIDE SEQUENCE [LARGE SCALE GENOMIC DNA]</scope>
    <source>
        <strain>ATCC BAA-935 / AF2122/97</strain>
    </source>
</reference>
<reference key="2">
    <citation type="journal article" date="2017" name="Genome Announc.">
        <title>Updated reference genome sequence and annotation of Mycobacterium bovis AF2122/97.</title>
        <authorList>
            <person name="Malone K.M."/>
            <person name="Farrell D."/>
            <person name="Stuber T.P."/>
            <person name="Schubert O.T."/>
            <person name="Aebersold R."/>
            <person name="Robbe-Austerman S."/>
            <person name="Gordon S.V."/>
        </authorList>
    </citation>
    <scope>NUCLEOTIDE SEQUENCE [LARGE SCALE GENOMIC DNA]</scope>
    <scope>GENOME REANNOTATION</scope>
    <source>
        <strain>ATCC BAA-935 / AF2122/97</strain>
    </source>
</reference>
<organism>
    <name type="scientific">Mycobacterium bovis (strain ATCC BAA-935 / AF2122/97)</name>
    <dbReference type="NCBI Taxonomy" id="233413"/>
    <lineage>
        <taxon>Bacteria</taxon>
        <taxon>Bacillati</taxon>
        <taxon>Actinomycetota</taxon>
        <taxon>Actinomycetes</taxon>
        <taxon>Mycobacteriales</taxon>
        <taxon>Mycobacteriaceae</taxon>
        <taxon>Mycobacterium</taxon>
        <taxon>Mycobacterium tuberculosis complex</taxon>
    </lineage>
</organism>
<name>OTSB_MYCBO</name>
<sequence>MRKLGPVTIDPRRHDAVLFDTTLDATQELVRQLQEVGVGTGVFGSGLDVPIVAAGRLAVRPGRCVVVSAHSAGVTAARESGFALIIGVDRTGCRDALRRDGADTVVTDLSEVSVRTGDRRMSQLPDALQALGLADGLVARQPAVFFDFDGTLSDIVEDPDAAWLAPGALEALQKLAARCPIAVLSGRDLADVTQRVGLPGIWYAGSHGFELTAPDGTHHQNDAAAAAIPVLKQAAAELRQQLGPFPGVVVEHKRFGVAVHYRNAARDRVGEVAAAVRTAEQRHALRVTTGREVIELRPDVDWDKGKTLLWVLDHLPHSGSAPLVPIYLGDDITDEDAFDVVGPHGVPIVVRHTDDGDRATAALFALDSPARVAEFTDRLARQLREAPLRAT</sequence>
<evidence type="ECO:0000250" key="1"/>
<evidence type="ECO:0000305" key="2"/>
<proteinExistence type="inferred from homology"/>
<feature type="chain" id="PRO_0000370701" description="Trehalose-phosphate phosphatase">
    <location>
        <begin position="1"/>
        <end position="391"/>
    </location>
</feature>
<feature type="active site" description="Nucleophile" evidence="1">
    <location>
        <position position="147"/>
    </location>
</feature>
<feature type="binding site" evidence="1">
    <location>
        <begin position="147"/>
        <end position="149"/>
    </location>
    <ligand>
        <name>substrate</name>
    </ligand>
</feature>
<feature type="binding site" evidence="1">
    <location>
        <position position="147"/>
    </location>
    <ligand>
        <name>Mg(2+)</name>
        <dbReference type="ChEBI" id="CHEBI:18420"/>
    </ligand>
</feature>
<feature type="binding site" evidence="1">
    <location>
        <position position="149"/>
    </location>
    <ligand>
        <name>Mg(2+)</name>
        <dbReference type="ChEBI" id="CHEBI:18420"/>
    </ligand>
</feature>
<feature type="binding site" evidence="1">
    <location>
        <position position="330"/>
    </location>
    <ligand>
        <name>Mg(2+)</name>
        <dbReference type="ChEBI" id="CHEBI:18420"/>
    </ligand>
</feature>
<dbReference type="EC" id="3.1.3.12"/>
<dbReference type="EMBL" id="LT708304">
    <property type="protein sequence ID" value="SIU02036.1"/>
    <property type="molecule type" value="Genomic_DNA"/>
</dbReference>
<dbReference type="RefSeq" id="NP_857048.1">
    <property type="nucleotide sequence ID" value="NC_002945.3"/>
</dbReference>
<dbReference type="RefSeq" id="WP_003417892.1">
    <property type="nucleotide sequence ID" value="NC_002945.4"/>
</dbReference>
<dbReference type="SMR" id="Q7TWL7"/>
<dbReference type="KEGG" id="mbo:BQ2027_MB3407"/>
<dbReference type="PATRIC" id="fig|233413.5.peg.3742"/>
<dbReference type="UniPathway" id="UPA00299"/>
<dbReference type="Proteomes" id="UP000001419">
    <property type="component" value="Chromosome"/>
</dbReference>
<dbReference type="GO" id="GO:0046872">
    <property type="term" value="F:metal ion binding"/>
    <property type="evidence" value="ECO:0007669"/>
    <property type="project" value="UniProtKB-KW"/>
</dbReference>
<dbReference type="GO" id="GO:0004805">
    <property type="term" value="F:trehalose-phosphatase activity"/>
    <property type="evidence" value="ECO:0007669"/>
    <property type="project" value="UniProtKB-EC"/>
</dbReference>
<dbReference type="GO" id="GO:0005992">
    <property type="term" value="P:trehalose biosynthetic process"/>
    <property type="evidence" value="ECO:0007669"/>
    <property type="project" value="UniProtKB-UniPathway"/>
</dbReference>
<dbReference type="CDD" id="cd01627">
    <property type="entry name" value="HAD_TPP"/>
    <property type="match status" value="1"/>
</dbReference>
<dbReference type="FunFam" id="3.30.70.1020:FF:000007">
    <property type="entry name" value="Trehalose 6-phosphate phosphatase"/>
    <property type="match status" value="1"/>
</dbReference>
<dbReference type="Gene3D" id="3.40.50.1000">
    <property type="entry name" value="HAD superfamily/HAD-like"/>
    <property type="match status" value="2"/>
</dbReference>
<dbReference type="Gene3D" id="3.30.70.1020">
    <property type="entry name" value="Trehalose-6-phosphate phosphatase related protein, domain 2"/>
    <property type="match status" value="1"/>
</dbReference>
<dbReference type="InterPro" id="IPR036412">
    <property type="entry name" value="HAD-like_sf"/>
</dbReference>
<dbReference type="InterPro" id="IPR006379">
    <property type="entry name" value="HAD-SF_hydro_IIB"/>
</dbReference>
<dbReference type="InterPro" id="IPR023214">
    <property type="entry name" value="HAD_sf"/>
</dbReference>
<dbReference type="InterPro" id="IPR044651">
    <property type="entry name" value="OTSB-like"/>
</dbReference>
<dbReference type="InterPro" id="IPR003337">
    <property type="entry name" value="Trehalose_PPase"/>
</dbReference>
<dbReference type="NCBIfam" id="TIGR01484">
    <property type="entry name" value="HAD-SF-IIB"/>
    <property type="match status" value="1"/>
</dbReference>
<dbReference type="NCBIfam" id="TIGR00685">
    <property type="entry name" value="T6PP"/>
    <property type="match status" value="1"/>
</dbReference>
<dbReference type="PANTHER" id="PTHR43768">
    <property type="entry name" value="TREHALOSE 6-PHOSPHATE PHOSPHATASE"/>
    <property type="match status" value="1"/>
</dbReference>
<dbReference type="PANTHER" id="PTHR43768:SF3">
    <property type="entry name" value="TREHALOSE 6-PHOSPHATE PHOSPHATASE"/>
    <property type="match status" value="1"/>
</dbReference>
<dbReference type="Pfam" id="PF02358">
    <property type="entry name" value="Trehalose_PPase"/>
    <property type="match status" value="1"/>
</dbReference>
<dbReference type="SUPFAM" id="SSF56784">
    <property type="entry name" value="HAD-like"/>
    <property type="match status" value="2"/>
</dbReference>
<comment type="function">
    <text evidence="1">Removes the phosphate from trehalose 6-phosphate to produce free trehalose.</text>
</comment>
<comment type="catalytic activity">
    <reaction>
        <text>alpha,alpha-trehalose 6-phosphate + H2O = alpha,alpha-trehalose + phosphate</text>
        <dbReference type="Rhea" id="RHEA:23420"/>
        <dbReference type="ChEBI" id="CHEBI:15377"/>
        <dbReference type="ChEBI" id="CHEBI:16551"/>
        <dbReference type="ChEBI" id="CHEBI:43474"/>
        <dbReference type="ChEBI" id="CHEBI:58429"/>
        <dbReference type="EC" id="3.1.3.12"/>
    </reaction>
</comment>
<comment type="cofactor">
    <cofactor evidence="1">
        <name>Mg(2+)</name>
        <dbReference type="ChEBI" id="CHEBI:18420"/>
    </cofactor>
</comment>
<comment type="pathway">
    <text>Glycan biosynthesis; trehalose biosynthesis.</text>
</comment>
<comment type="similarity">
    <text evidence="2">Belongs to the trehalose phosphatase family.</text>
</comment>
<gene>
    <name type="primary">otsB</name>
    <name type="ordered locus">BQ2027_MB3407</name>
</gene>
<protein>
    <recommendedName>
        <fullName>Trehalose-phosphate phosphatase</fullName>
        <shortName>TPP</shortName>
        <ecNumber>3.1.3.12</ecNumber>
    </recommendedName>
    <alternativeName>
        <fullName>Trehalose-6-phosphate phosphatase</fullName>
    </alternativeName>
</protein>
<keyword id="KW-0378">Hydrolase</keyword>
<keyword id="KW-0460">Magnesium</keyword>
<keyword id="KW-0479">Metal-binding</keyword>
<keyword id="KW-1185">Reference proteome</keyword>